<proteinExistence type="evidence at protein level"/>
<evidence type="ECO:0000250" key="1"/>
<evidence type="ECO:0000250" key="2">
    <source>
        <dbReference type="UniProtKB" id="F1M386"/>
    </source>
</evidence>
<evidence type="ECO:0000250" key="3">
    <source>
        <dbReference type="UniProtKB" id="Q8CHG7"/>
    </source>
</evidence>
<evidence type="ECO:0000250" key="4">
    <source>
        <dbReference type="UniProtKB" id="Q9Y4G8"/>
    </source>
</evidence>
<evidence type="ECO:0000255" key="5">
    <source>
        <dbReference type="PROSITE-ProRule" id="PRU00135"/>
    </source>
</evidence>
<evidence type="ECO:0000255" key="6">
    <source>
        <dbReference type="PROSITE-ProRule" id="PRU00143"/>
    </source>
</evidence>
<evidence type="ECO:0000255" key="7">
    <source>
        <dbReference type="PROSITE-ProRule" id="PRU00166"/>
    </source>
</evidence>
<evidence type="ECO:0000255" key="8">
    <source>
        <dbReference type="PROSITE-ProRule" id="PRU00168"/>
    </source>
</evidence>
<evidence type="ECO:0000256" key="9">
    <source>
        <dbReference type="SAM" id="MobiDB-lite"/>
    </source>
</evidence>
<evidence type="ECO:0000269" key="10">
    <source>
    </source>
</evidence>
<evidence type="ECO:0000269" key="11">
    <source>
    </source>
</evidence>
<evidence type="ECO:0000305" key="12"/>
<protein>
    <recommendedName>
        <fullName>Rap guanine nucleotide exchange factor 2</fullName>
    </recommendedName>
    <alternativeName>
        <fullName>Cyclic nucleotide ras GEF</fullName>
        <shortName>CNrasGEF</shortName>
    </alternativeName>
    <alternativeName>
        <fullName>Neural RAP guanine nucleotide exchange protein</fullName>
        <shortName>nRap GEP</shortName>
    </alternativeName>
    <alternativeName>
        <fullName>PDZ domain-containing guanine nucleotide exchange factor 1</fullName>
        <shortName>PDZ-GEF1</shortName>
    </alternativeName>
    <alternativeName>
        <fullName>RA-GEF-1</fullName>
    </alternativeName>
    <alternativeName>
        <fullName>Ras/Rap1-associating GEF-1</fullName>
    </alternativeName>
</protein>
<feature type="chain" id="PRO_0000423853" description="Rap guanine nucleotide exchange factor 2">
    <location>
        <begin position="1"/>
        <end position="1486"/>
    </location>
</feature>
<feature type="domain" description="N-terminal Ras-GEF" evidence="5">
    <location>
        <begin position="267"/>
        <end position="380"/>
    </location>
</feature>
<feature type="domain" description="PDZ" evidence="6">
    <location>
        <begin position="385"/>
        <end position="468"/>
    </location>
</feature>
<feature type="domain" description="Ras-associating" evidence="7">
    <location>
        <begin position="606"/>
        <end position="692"/>
    </location>
</feature>
<feature type="domain" description="Ras-GEF" evidence="8">
    <location>
        <begin position="717"/>
        <end position="944"/>
    </location>
</feature>
<feature type="region of interest" description="Disordered" evidence="9">
    <location>
        <begin position="40"/>
        <end position="59"/>
    </location>
</feature>
<feature type="region of interest" description="Disordered" evidence="9">
    <location>
        <begin position="68"/>
        <end position="101"/>
    </location>
</feature>
<feature type="region of interest" description="Disordered" evidence="9">
    <location>
        <begin position="1002"/>
        <end position="1049"/>
    </location>
</feature>
<feature type="region of interest" description="Disordered" evidence="9">
    <location>
        <begin position="1090"/>
        <end position="1176"/>
    </location>
</feature>
<feature type="region of interest" description="Disordered" evidence="9">
    <location>
        <begin position="1221"/>
        <end position="1254"/>
    </location>
</feature>
<feature type="region of interest" description="Disordered" evidence="9">
    <location>
        <begin position="1303"/>
        <end position="1357"/>
    </location>
</feature>
<feature type="region of interest" description="Disordered" evidence="9">
    <location>
        <begin position="1391"/>
        <end position="1486"/>
    </location>
</feature>
<feature type="compositionally biased region" description="Acidic residues" evidence="9">
    <location>
        <begin position="83"/>
        <end position="94"/>
    </location>
</feature>
<feature type="compositionally biased region" description="Pro residues" evidence="9">
    <location>
        <begin position="1035"/>
        <end position="1044"/>
    </location>
</feature>
<feature type="compositionally biased region" description="Low complexity" evidence="9">
    <location>
        <begin position="1105"/>
        <end position="1122"/>
    </location>
</feature>
<feature type="compositionally biased region" description="Low complexity" evidence="9">
    <location>
        <begin position="1138"/>
        <end position="1159"/>
    </location>
</feature>
<feature type="compositionally biased region" description="Polar residues" evidence="9">
    <location>
        <begin position="1244"/>
        <end position="1254"/>
    </location>
</feature>
<feature type="compositionally biased region" description="Polar residues" evidence="9">
    <location>
        <begin position="1304"/>
        <end position="1328"/>
    </location>
</feature>
<feature type="compositionally biased region" description="Acidic residues" evidence="9">
    <location>
        <begin position="1475"/>
        <end position="1486"/>
    </location>
</feature>
<feature type="binding site">
    <location>
        <begin position="135"/>
        <end position="252"/>
    </location>
    <ligand>
        <name>a nucleoside 3',5'-cyclic phosphate</name>
        <dbReference type="ChEBI" id="CHEBI:58464"/>
    </ligand>
</feature>
<feature type="modified residue" description="Phosphoserine" evidence="2">
    <location>
        <position position="501"/>
    </location>
</feature>
<feature type="modified residue" description="Phosphothreonine" evidence="2">
    <location>
        <position position="644"/>
    </location>
</feature>
<feature type="modified residue" description="Phosphoserine" evidence="2">
    <location>
        <position position="806"/>
    </location>
</feature>
<feature type="modified residue" description="Phosphoserine" evidence="2">
    <location>
        <position position="930"/>
    </location>
</feature>
<feature type="modified residue" description="Phosphoserine" evidence="2">
    <location>
        <position position="933"/>
    </location>
</feature>
<feature type="modified residue" description="Phosphoserine" evidence="3">
    <location>
        <position position="1022"/>
    </location>
</feature>
<feature type="modified residue" description="Phosphoserine" evidence="4">
    <location>
        <position position="1077"/>
    </location>
</feature>
<feature type="modified residue" description="Phosphoserine" evidence="4">
    <location>
        <position position="1086"/>
    </location>
</feature>
<feature type="modified residue" description="Phosphoserine" evidence="4">
    <location>
        <position position="1092"/>
    </location>
</feature>
<feature type="modified residue" description="Phosphoserine" evidence="3">
    <location>
        <position position="1113"/>
    </location>
</feature>
<feature type="modified residue" description="Phosphoserine" evidence="3">
    <location>
        <position position="1117"/>
    </location>
</feature>
<feature type="modified residue" description="Phosphoserine" evidence="4">
    <location>
        <position position="1156"/>
    </location>
</feature>
<feature type="modified residue" description="Phosphoserine" evidence="2">
    <location>
        <position position="1173"/>
    </location>
</feature>
<organism>
    <name type="scientific">Bos taurus</name>
    <name type="common">Bovine</name>
    <dbReference type="NCBI Taxonomy" id="9913"/>
    <lineage>
        <taxon>Eukaryota</taxon>
        <taxon>Metazoa</taxon>
        <taxon>Chordata</taxon>
        <taxon>Craniata</taxon>
        <taxon>Vertebrata</taxon>
        <taxon>Euteleostomi</taxon>
        <taxon>Mammalia</taxon>
        <taxon>Eutheria</taxon>
        <taxon>Laurasiatheria</taxon>
        <taxon>Artiodactyla</taxon>
        <taxon>Ruminantia</taxon>
        <taxon>Pecora</taxon>
        <taxon>Bovidae</taxon>
        <taxon>Bovinae</taxon>
        <taxon>Bos</taxon>
    </lineage>
</organism>
<reference key="1">
    <citation type="journal article" date="2009" name="Genome Biol.">
        <title>A whole-genome assembly of the domestic cow, Bos taurus.</title>
        <authorList>
            <person name="Zimin A.V."/>
            <person name="Delcher A.L."/>
            <person name="Florea L."/>
            <person name="Kelley D.R."/>
            <person name="Schatz M.C."/>
            <person name="Puiu D."/>
            <person name="Hanrahan F."/>
            <person name="Pertea G."/>
            <person name="Van Tassell C.P."/>
            <person name="Sonstegard T.S."/>
            <person name="Marcais G."/>
            <person name="Roberts M."/>
            <person name="Subramanian P."/>
            <person name="Yorke J.A."/>
            <person name="Salzberg S.L."/>
        </authorList>
    </citation>
    <scope>NUCLEOTIDE SEQUENCE [LARGE SCALE GENOMIC DNA]</scope>
    <source>
        <strain>Hereford</strain>
    </source>
</reference>
<reference key="2">
    <citation type="journal article" date="2000" name="Biochem. Biophys. Res. Commun.">
        <title>Identification of a novel beta-catenin-interacting protein.</title>
        <authorList>
            <person name="Kawajiri A."/>
            <person name="Itoh N."/>
            <person name="Fukata M."/>
            <person name="Nakagawa M."/>
            <person name="Yamaga M."/>
            <person name="Iwamatsu A."/>
            <person name="Kaibuchi K."/>
        </authorList>
    </citation>
    <scope>INTERACTION WITH CTNNB1</scope>
    <scope>IDENTIFICATION BY MASS SPECTROMETRY</scope>
</reference>
<reference key="3">
    <citation type="journal article" date="2013" name="Sci. Signal.">
        <title>Rapgef2 Connects GPCR-Mediated cAMP Signals to ERK Activation in Neuronal and Endocrine Cells.</title>
        <authorList>
            <person name="Emery A.C."/>
            <person name="Eiden M.V."/>
            <person name="Mustafa T."/>
            <person name="Eiden L.E."/>
        </authorList>
    </citation>
    <scope>FUNCTION</scope>
</reference>
<comment type="function">
    <text evidence="1 11">Functions as a guanine nucleotide exchange factor (GEF), which activates Rap and Ras family of small GTPases by exchanging bound GDP for free GTP in a cAMP-dependent manner. Serves as a link between cell surface receptors and Rap/Ras GTPases in intracellular signaling cascades. Also acts as an effector for Rap1 by direct association with Rap1-GTP thereby leading to the amplification of Rap1-mediated signaling. Shows weak activity on HRAS. It is controversial whether RAPGEF2 binds cAMP and cGMP or not. Its binding to ligand-activated beta-1 adrenergic receptor ADRB1 leads to the Ras activation through the G(s)-alpha signaling pathway. Involved in the cAMP-induced Ras and Erk1/2 signaling pathway that leads to sustained inhibition of long term melanogenesis by reducing dendrite extension and melanin synthesis. Also provides inhibitory signals for cell proliferation of melanoma cells and promotes their apoptosis in a cAMP-independent nanner. Regulates cAMP-induced neuritogenesis by mediating the Rap1/B-Raf/ERK signaling through a pathway that is independent on both PKA and RAPGEF3/RAPGEF4. Involved in neuron migration and in the formation of the major forebrain fiber connections forming the corpus callosum, the anterior commissure and the hippocampal commissure during brain development. Involved in neuronal growth factor (NGF)-induced sustained activation of Rap1 at late endosomes and in brain-derived neurotrophic factor (BDNF)-induced axon outgrowth of hippocampal neurons. Plays a role in the regulation of embryonic blood vessel formation and in the establishment of basal junction integrity and endothelial barrier function. May be involved in the regulation of the vascular endothelial growth factor receptor KDR and cadherin CDH5 expression at allantois endothelial cell-cell junctions (By similarity). Binds to cAMP.</text>
</comment>
<comment type="subunit">
    <text evidence="1 10">Found in a complex, at least composed of KIDINS220, MAGI2, NTRK1 and RAPGEF2; the complex is mainly formed at late endosomes in a neuronal growth factor (NGF)-dependent manner. Interacts (via C-terminal domain) with NEDD4 (via WW domains); this interaction leads to ubiquitination and degradation via the proteasome pathway in a cAMP-independent manner. Interacts with MAGI1 (via PDZ domain). Interacts with ADRB1 (via C-terminal PDZ motif); the interaction is direct. Interacts (via Ras-associating domain) with RAP1A (via GTP-bound active form). Interacts weakly with HRAS (via GDP- and GTP-bound forms). Interacts (via C-terminal domain) with MAGI2 (via PDZ and WW domains). Interacts with CDH1 and TJP1 (By similarity). Interacts with CTNNB1.</text>
</comment>
<comment type="interaction">
    <interactant intactId="EBI-6927068">
        <id>F1MSG6</id>
    </interactant>
    <interactant intactId="EBI-397872">
        <id>Q02248</id>
        <label>Ctnnb1</label>
    </interactant>
    <organismsDiffer>true</organismsDiffer>
    <experiments>2</experiments>
</comment>
<comment type="subcellular location">
    <subcellularLocation>
        <location evidence="1">Cytoplasm</location>
    </subcellularLocation>
    <subcellularLocation>
        <location evidence="1">Cytoplasm</location>
        <location evidence="1">Perinuclear region</location>
    </subcellularLocation>
    <subcellularLocation>
        <location evidence="1">Cell membrane</location>
    </subcellularLocation>
    <subcellularLocation>
        <location evidence="1">Late endosome</location>
    </subcellularLocation>
    <subcellularLocation>
        <location evidence="1">Cell junction</location>
    </subcellularLocation>
    <text evidence="1">Associated with the synaptic plasma membrane. Localized diffusely in the cytoplasm before neuronal growth factor (NGF) stimulation. Recruited to late endosomes after NGF stimulation. Colocalized with the high affinity nerve growth factor receptor NTRK1 at late endosomes. Translocated to the perinuclear region in a RAP1A-dependent manner. Translocated to the cell membrane. Colocalized with CTNNB1 at cell-cell contacts (By similarity).</text>
</comment>
<comment type="domain">
    <text evidence="1">The Ras-associating domain is necessary for the Rap guanine nucleotide exchange activity. The N-terminal regionis necessary for cAMP-binding. The PDZ domain is necessary for its targeting to the cell membrane (By similarity).</text>
</comment>
<comment type="PTM">
    <text evidence="1">Ubiquitinated by NEDD4, leading to proteasomal degradation.</text>
</comment>
<comment type="PTM">
    <text evidence="1">Phosphorylation by PLK2 promotes its activity.</text>
</comment>
<comment type="similarity">
    <text evidence="12">Belongs to the RAPGEF2 family.</text>
</comment>
<accession>F1MSG6</accession>
<keyword id="KW-0965">Cell junction</keyword>
<keyword id="KW-1003">Cell membrane</keyword>
<keyword id="KW-0963">Cytoplasm</keyword>
<keyword id="KW-0217">Developmental protein</keyword>
<keyword id="KW-0221">Differentiation</keyword>
<keyword id="KW-0967">Endosome</keyword>
<keyword id="KW-0343">GTPase activation</keyword>
<keyword id="KW-0344">Guanine-nucleotide releasing factor</keyword>
<keyword id="KW-0472">Membrane</keyword>
<keyword id="KW-0524">Neurogenesis</keyword>
<keyword id="KW-0597">Phosphoprotein</keyword>
<keyword id="KW-1185">Reference proteome</keyword>
<keyword id="KW-0832">Ubl conjugation</keyword>
<dbReference type="EMBL" id="DAAA02044847">
    <property type="status" value="NOT_ANNOTATED_CDS"/>
    <property type="molecule type" value="Genomic_DNA"/>
</dbReference>
<dbReference type="RefSeq" id="NP_001178255.1">
    <property type="nucleotide sequence ID" value="NM_001191326.1"/>
</dbReference>
<dbReference type="FunCoup" id="F1MSG6">
    <property type="interactions" value="3005"/>
</dbReference>
<dbReference type="IntAct" id="F1MSG6">
    <property type="interactions" value="2"/>
</dbReference>
<dbReference type="STRING" id="9913.ENSBTAP00000057535"/>
<dbReference type="PaxDb" id="9913-ENSBTAP00000029739"/>
<dbReference type="GeneID" id="100139484"/>
<dbReference type="KEGG" id="bta:100139484"/>
<dbReference type="CTD" id="9693"/>
<dbReference type="VEuPathDB" id="HostDB:ENSBTAG00000012450"/>
<dbReference type="eggNOG" id="KOG3542">
    <property type="taxonomic scope" value="Eukaryota"/>
</dbReference>
<dbReference type="HOGENOM" id="CLU_002782_0_1_1"/>
<dbReference type="InParanoid" id="F1MSG6"/>
<dbReference type="OrthoDB" id="546434at2759"/>
<dbReference type="TreeFam" id="TF313184"/>
<dbReference type="Reactome" id="R-BTA-5673001">
    <property type="pathway name" value="RAF/MAP kinase cascade"/>
</dbReference>
<dbReference type="Proteomes" id="UP000009136">
    <property type="component" value="Chromosome 17"/>
</dbReference>
<dbReference type="Bgee" id="ENSBTAG00000012450">
    <property type="expression patterns" value="Expressed in cardiac ventricle and 107 other cell types or tissues"/>
</dbReference>
<dbReference type="GO" id="GO:0016324">
    <property type="term" value="C:apical plasma membrane"/>
    <property type="evidence" value="ECO:0000318"/>
    <property type="project" value="GO_Central"/>
</dbReference>
<dbReference type="GO" id="GO:0005911">
    <property type="term" value="C:cell-cell junction"/>
    <property type="evidence" value="ECO:0000250"/>
    <property type="project" value="UniProtKB"/>
</dbReference>
<dbReference type="GO" id="GO:0005737">
    <property type="term" value="C:cytoplasm"/>
    <property type="evidence" value="ECO:0000250"/>
    <property type="project" value="UniProtKB"/>
</dbReference>
<dbReference type="GO" id="GO:0030139">
    <property type="term" value="C:endocytic vesicle"/>
    <property type="evidence" value="ECO:0000318"/>
    <property type="project" value="GO_Central"/>
</dbReference>
<dbReference type="GO" id="GO:0005770">
    <property type="term" value="C:late endosome"/>
    <property type="evidence" value="ECO:0000250"/>
    <property type="project" value="UniProtKB"/>
</dbReference>
<dbReference type="GO" id="GO:0043005">
    <property type="term" value="C:neuron projection"/>
    <property type="evidence" value="ECO:0000250"/>
    <property type="project" value="UniProtKB"/>
</dbReference>
<dbReference type="GO" id="GO:0043025">
    <property type="term" value="C:neuronal cell body"/>
    <property type="evidence" value="ECO:0000250"/>
    <property type="project" value="UniProtKB"/>
</dbReference>
<dbReference type="GO" id="GO:0048471">
    <property type="term" value="C:perinuclear region of cytoplasm"/>
    <property type="evidence" value="ECO:0000250"/>
    <property type="project" value="UniProtKB"/>
</dbReference>
<dbReference type="GO" id="GO:0005886">
    <property type="term" value="C:plasma membrane"/>
    <property type="evidence" value="ECO:0000250"/>
    <property type="project" value="UniProtKB"/>
</dbReference>
<dbReference type="GO" id="GO:0032991">
    <property type="term" value="C:protein-containing complex"/>
    <property type="evidence" value="ECO:0000250"/>
    <property type="project" value="UniProtKB"/>
</dbReference>
<dbReference type="GO" id="GO:0045202">
    <property type="term" value="C:synapse"/>
    <property type="evidence" value="ECO:0000250"/>
    <property type="project" value="UniProtKB"/>
</dbReference>
<dbReference type="GO" id="GO:0031697">
    <property type="term" value="F:beta-1 adrenergic receptor binding"/>
    <property type="evidence" value="ECO:0000250"/>
    <property type="project" value="UniProtKB"/>
</dbReference>
<dbReference type="GO" id="GO:0030552">
    <property type="term" value="F:cAMP binding"/>
    <property type="evidence" value="ECO:0000314"/>
    <property type="project" value="UniProtKB"/>
</dbReference>
<dbReference type="GO" id="GO:0005096">
    <property type="term" value="F:GTPase activator activity"/>
    <property type="evidence" value="ECO:0007669"/>
    <property type="project" value="UniProtKB-KW"/>
</dbReference>
<dbReference type="GO" id="GO:0005085">
    <property type="term" value="F:guanyl-nucleotide exchange factor activity"/>
    <property type="evidence" value="ECO:0000250"/>
    <property type="project" value="UniProtKB"/>
</dbReference>
<dbReference type="GO" id="GO:0030165">
    <property type="term" value="F:PDZ domain binding"/>
    <property type="evidence" value="ECO:0000250"/>
    <property type="project" value="UniProtKB"/>
</dbReference>
<dbReference type="GO" id="GO:0050699">
    <property type="term" value="F:WW domain binding"/>
    <property type="evidence" value="ECO:0000250"/>
    <property type="project" value="UniProtKB"/>
</dbReference>
<dbReference type="GO" id="GO:0071880">
    <property type="term" value="P:adenylate cyclase-activating adrenergic receptor signaling pathway"/>
    <property type="evidence" value="ECO:0000250"/>
    <property type="project" value="UniProtKB"/>
</dbReference>
<dbReference type="GO" id="GO:0007188">
    <property type="term" value="P:adenylate cyclase-modulating G protein-coupled receptor signaling pathway"/>
    <property type="evidence" value="ECO:0000250"/>
    <property type="project" value="UniProtKB"/>
</dbReference>
<dbReference type="GO" id="GO:0001568">
    <property type="term" value="P:blood vessel development"/>
    <property type="evidence" value="ECO:0000250"/>
    <property type="project" value="UniProtKB"/>
</dbReference>
<dbReference type="GO" id="GO:0031547">
    <property type="term" value="P:brain-derived neurotrophic factor receptor signaling pathway"/>
    <property type="evidence" value="ECO:0000250"/>
    <property type="project" value="UniProtKB"/>
</dbReference>
<dbReference type="GO" id="GO:0071320">
    <property type="term" value="P:cellular response to cAMP"/>
    <property type="evidence" value="ECO:0000250"/>
    <property type="project" value="UniProtKB"/>
</dbReference>
<dbReference type="GO" id="GO:0071321">
    <property type="term" value="P:cellular response to cGMP"/>
    <property type="evidence" value="ECO:0000250"/>
    <property type="project" value="UniProtKB"/>
</dbReference>
<dbReference type="GO" id="GO:1990090">
    <property type="term" value="P:cellular response to nerve growth factor stimulus"/>
    <property type="evidence" value="ECO:0000250"/>
    <property type="project" value="UniProtKB"/>
</dbReference>
<dbReference type="GO" id="GO:0061028">
    <property type="term" value="P:establishment of endothelial barrier"/>
    <property type="evidence" value="ECO:0000250"/>
    <property type="project" value="UniProtKB"/>
</dbReference>
<dbReference type="GO" id="GO:0021884">
    <property type="term" value="P:forebrain neuron development"/>
    <property type="evidence" value="ECO:0000250"/>
    <property type="project" value="UniProtKB"/>
</dbReference>
<dbReference type="GO" id="GO:0007186">
    <property type="term" value="P:G protein-coupled receptor signaling pathway"/>
    <property type="evidence" value="ECO:0000250"/>
    <property type="project" value="UniProtKB"/>
</dbReference>
<dbReference type="GO" id="GO:0008285">
    <property type="term" value="P:negative regulation of cell population proliferation"/>
    <property type="evidence" value="ECO:0000250"/>
    <property type="project" value="UniProtKB"/>
</dbReference>
<dbReference type="GO" id="GO:0050774">
    <property type="term" value="P:negative regulation of dendrite morphogenesis"/>
    <property type="evidence" value="ECO:0000250"/>
    <property type="project" value="UniProtKB"/>
</dbReference>
<dbReference type="GO" id="GO:0048022">
    <property type="term" value="P:negative regulation of melanin biosynthetic process"/>
    <property type="evidence" value="ECO:0000250"/>
    <property type="project" value="UniProtKB"/>
</dbReference>
<dbReference type="GO" id="GO:0038180">
    <property type="term" value="P:nerve growth factor signaling pathway"/>
    <property type="evidence" value="ECO:0000250"/>
    <property type="project" value="UniProtKB"/>
</dbReference>
<dbReference type="GO" id="GO:0001764">
    <property type="term" value="P:neuron migration"/>
    <property type="evidence" value="ECO:0000250"/>
    <property type="project" value="UniProtKB"/>
</dbReference>
<dbReference type="GO" id="GO:0031175">
    <property type="term" value="P:neuron projection development"/>
    <property type="evidence" value="ECO:0000250"/>
    <property type="project" value="UniProtKB"/>
</dbReference>
<dbReference type="GO" id="GO:0007218">
    <property type="term" value="P:neuropeptide signaling pathway"/>
    <property type="evidence" value="ECO:0000250"/>
    <property type="project" value="UniProtKB"/>
</dbReference>
<dbReference type="GO" id="GO:2000481">
    <property type="term" value="P:positive regulation of cAMP-dependent protein kinase activity"/>
    <property type="evidence" value="ECO:0000250"/>
    <property type="project" value="UniProtKB"/>
</dbReference>
<dbReference type="GO" id="GO:2000670">
    <property type="term" value="P:positive regulation of dendritic cell apoptotic process"/>
    <property type="evidence" value="ECO:0000250"/>
    <property type="project" value="UniProtKB"/>
</dbReference>
<dbReference type="GO" id="GO:0070374">
    <property type="term" value="P:positive regulation of ERK1 and ERK2 cascade"/>
    <property type="evidence" value="ECO:0000250"/>
    <property type="project" value="UniProtKB"/>
</dbReference>
<dbReference type="GO" id="GO:0043547">
    <property type="term" value="P:positive regulation of GTPase activity"/>
    <property type="evidence" value="ECO:0000250"/>
    <property type="project" value="UniProtKB"/>
</dbReference>
<dbReference type="GO" id="GO:2001224">
    <property type="term" value="P:positive regulation of neuron migration"/>
    <property type="evidence" value="ECO:0000250"/>
    <property type="project" value="UniProtKB"/>
</dbReference>
<dbReference type="GO" id="GO:0010976">
    <property type="term" value="P:positive regulation of neuron projection development"/>
    <property type="evidence" value="ECO:0000250"/>
    <property type="project" value="UniProtKB"/>
</dbReference>
<dbReference type="GO" id="GO:0032092">
    <property type="term" value="P:positive regulation of protein binding"/>
    <property type="evidence" value="ECO:0000250"/>
    <property type="project" value="UniProtKB"/>
</dbReference>
<dbReference type="GO" id="GO:0045860">
    <property type="term" value="P:positive regulation of protein kinase activity"/>
    <property type="evidence" value="ECO:0000250"/>
    <property type="project" value="UniProtKB"/>
</dbReference>
<dbReference type="GO" id="GO:2001214">
    <property type="term" value="P:positive regulation of vasculogenesis"/>
    <property type="evidence" value="ECO:0000250"/>
    <property type="project" value="UniProtKB"/>
</dbReference>
<dbReference type="GO" id="GO:0032486">
    <property type="term" value="P:Rap protein signal transduction"/>
    <property type="evidence" value="ECO:0000250"/>
    <property type="project" value="UniProtKB"/>
</dbReference>
<dbReference type="GO" id="GO:0007265">
    <property type="term" value="P:Ras protein signal transduction"/>
    <property type="evidence" value="ECO:0000318"/>
    <property type="project" value="GO_Central"/>
</dbReference>
<dbReference type="GO" id="GO:1901888">
    <property type="term" value="P:regulation of cell junction assembly"/>
    <property type="evidence" value="ECO:0000250"/>
    <property type="project" value="UniProtKB"/>
</dbReference>
<dbReference type="GO" id="GO:0021591">
    <property type="term" value="P:ventricular system development"/>
    <property type="evidence" value="ECO:0000250"/>
    <property type="project" value="UniProtKB"/>
</dbReference>
<dbReference type="CDD" id="cd00038">
    <property type="entry name" value="CAP_ED"/>
    <property type="match status" value="1"/>
</dbReference>
<dbReference type="CDD" id="cd06755">
    <property type="entry name" value="PDZ_RapGEF2_RapGEF6-like"/>
    <property type="match status" value="1"/>
</dbReference>
<dbReference type="CDD" id="cd01785">
    <property type="entry name" value="RA_PDZ-GEF1"/>
    <property type="match status" value="1"/>
</dbReference>
<dbReference type="CDD" id="cd00155">
    <property type="entry name" value="RasGEF"/>
    <property type="match status" value="1"/>
</dbReference>
<dbReference type="CDD" id="cd06224">
    <property type="entry name" value="REM"/>
    <property type="match status" value="1"/>
</dbReference>
<dbReference type="FunFam" id="2.60.120.10:FF:000008">
    <property type="entry name" value="Rap guanine nucleotide exchange factor (GEF) 2"/>
    <property type="match status" value="1"/>
</dbReference>
<dbReference type="FunFam" id="1.10.840.10:FF:000001">
    <property type="entry name" value="Rap guanine nucleotide exchange factor (GEF) 6"/>
    <property type="match status" value="1"/>
</dbReference>
<dbReference type="FunFam" id="2.30.42.10:FF:000024">
    <property type="entry name" value="rap guanine nucleotide exchange factor 2 isoform X1"/>
    <property type="match status" value="1"/>
</dbReference>
<dbReference type="FunFam" id="1.20.870.10:FF:000001">
    <property type="entry name" value="rap guanine nucleotide exchange factor 2 isoform X2"/>
    <property type="match status" value="1"/>
</dbReference>
<dbReference type="Gene3D" id="2.30.42.10">
    <property type="match status" value="1"/>
</dbReference>
<dbReference type="Gene3D" id="2.60.120.10">
    <property type="entry name" value="Jelly Rolls"/>
    <property type="match status" value="1"/>
</dbReference>
<dbReference type="Gene3D" id="3.10.20.90">
    <property type="entry name" value="Phosphatidylinositol 3-kinase Catalytic Subunit, Chain A, domain 1"/>
    <property type="match status" value="1"/>
</dbReference>
<dbReference type="Gene3D" id="1.10.840.10">
    <property type="entry name" value="Ras guanine-nucleotide exchange factors catalytic domain"/>
    <property type="match status" value="1"/>
</dbReference>
<dbReference type="Gene3D" id="1.20.870.10">
    <property type="entry name" value="Son of sevenless (SoS) protein Chain: S domain 1"/>
    <property type="match status" value="1"/>
</dbReference>
<dbReference type="InterPro" id="IPR000595">
    <property type="entry name" value="cNMP-bd_dom"/>
</dbReference>
<dbReference type="InterPro" id="IPR018490">
    <property type="entry name" value="cNMP-bd_dom_sf"/>
</dbReference>
<dbReference type="InterPro" id="IPR001478">
    <property type="entry name" value="PDZ"/>
</dbReference>
<dbReference type="InterPro" id="IPR036034">
    <property type="entry name" value="PDZ_sf"/>
</dbReference>
<dbReference type="InterPro" id="IPR000159">
    <property type="entry name" value="RA_dom"/>
</dbReference>
<dbReference type="InterPro" id="IPR000651">
    <property type="entry name" value="Ras-like_Gua-exchang_fac_N"/>
</dbReference>
<dbReference type="InterPro" id="IPR023578">
    <property type="entry name" value="Ras_GEF_dom_sf"/>
</dbReference>
<dbReference type="InterPro" id="IPR001895">
    <property type="entry name" value="RASGEF_cat_dom"/>
</dbReference>
<dbReference type="InterPro" id="IPR036964">
    <property type="entry name" value="RASGEF_cat_dom_sf"/>
</dbReference>
<dbReference type="InterPro" id="IPR014710">
    <property type="entry name" value="RmlC-like_jellyroll"/>
</dbReference>
<dbReference type="InterPro" id="IPR029071">
    <property type="entry name" value="Ubiquitin-like_domsf"/>
</dbReference>
<dbReference type="PANTHER" id="PTHR45161">
    <property type="entry name" value="CYTOSKELETON-ASSOCIATED PROTEIN 4"/>
    <property type="match status" value="1"/>
</dbReference>
<dbReference type="PANTHER" id="PTHR45161:SF2">
    <property type="entry name" value="RAP GUANINE NUCLEOTIDE EXCHANGE FACTOR 2"/>
    <property type="match status" value="1"/>
</dbReference>
<dbReference type="Pfam" id="PF00595">
    <property type="entry name" value="PDZ"/>
    <property type="match status" value="1"/>
</dbReference>
<dbReference type="Pfam" id="PF00788">
    <property type="entry name" value="RA"/>
    <property type="match status" value="1"/>
</dbReference>
<dbReference type="Pfam" id="PF00617">
    <property type="entry name" value="RasGEF"/>
    <property type="match status" value="1"/>
</dbReference>
<dbReference type="Pfam" id="PF00618">
    <property type="entry name" value="RasGEF_N"/>
    <property type="match status" value="1"/>
</dbReference>
<dbReference type="SMART" id="SM00100">
    <property type="entry name" value="cNMP"/>
    <property type="match status" value="1"/>
</dbReference>
<dbReference type="SMART" id="SM00228">
    <property type="entry name" value="PDZ"/>
    <property type="match status" value="1"/>
</dbReference>
<dbReference type="SMART" id="SM00314">
    <property type="entry name" value="RA"/>
    <property type="match status" value="1"/>
</dbReference>
<dbReference type="SMART" id="SM00147">
    <property type="entry name" value="RasGEF"/>
    <property type="match status" value="1"/>
</dbReference>
<dbReference type="SMART" id="SM00229">
    <property type="entry name" value="RasGEFN"/>
    <property type="match status" value="1"/>
</dbReference>
<dbReference type="SUPFAM" id="SSF51206">
    <property type="entry name" value="cAMP-binding domain-like"/>
    <property type="match status" value="1"/>
</dbReference>
<dbReference type="SUPFAM" id="SSF50156">
    <property type="entry name" value="PDZ domain-like"/>
    <property type="match status" value="1"/>
</dbReference>
<dbReference type="SUPFAM" id="SSF48366">
    <property type="entry name" value="Ras GEF"/>
    <property type="match status" value="1"/>
</dbReference>
<dbReference type="SUPFAM" id="SSF54236">
    <property type="entry name" value="Ubiquitin-like"/>
    <property type="match status" value="1"/>
</dbReference>
<dbReference type="PROSITE" id="PS50042">
    <property type="entry name" value="CNMP_BINDING_3"/>
    <property type="match status" value="1"/>
</dbReference>
<dbReference type="PROSITE" id="PS50106">
    <property type="entry name" value="PDZ"/>
    <property type="match status" value="1"/>
</dbReference>
<dbReference type="PROSITE" id="PS50200">
    <property type="entry name" value="RA"/>
    <property type="match status" value="1"/>
</dbReference>
<dbReference type="PROSITE" id="PS50009">
    <property type="entry name" value="RASGEF_CAT"/>
    <property type="match status" value="1"/>
</dbReference>
<dbReference type="PROSITE" id="PS50212">
    <property type="entry name" value="RASGEF_NTER"/>
    <property type="match status" value="1"/>
</dbReference>
<name>RPGF2_BOVIN</name>
<sequence>MKPLAIPANHGVMGQQEKHSLPADFTKLHLTDSLHPQVTHVSSSHSGCSITSDSGSSSLSDIYQATESEAGDMDLSGLPETAVDSEDDDDEEDIERASDPLMSRDIVRDCLEKDPIDRTDDDIEQLLEFMHQLPAFANMTMSVRRELCAVMVFAVVERAGTIVLNDGEELDSWSVILNGSVEVTYPDGKAEILCMGNSFGVSPTMDKEYMKGVMRTKVDDCQFVCIAQQDYCRILNQVEKNMQKVEEEGEIVMVKEHRELDRTGTRKGHIVIKGTSERLTMHLVEEHSVVDPTFIEDFLLTYRTFLCSPMEVGKKLLEWFNDPSLRDKVTRVVLLWVNNHFNDFEGDPAMTRFLEEFENNLEREKMGGHLRLLNIACAAKAKRRLMTLTKPAREAPLPFILLGGSEKGFGIFVDSVDSASKATEAGLKRGDQILEVNGQNFENIQLSKAMEILRNNTHLSITVKTNLFVFKELLTRLSEEKRNGAPHLPKIGDIKKASRYSIPDLAVDVEQVIGLEKVNKKSKANTVGGRNKLKKILDKTRISILPQKPYNDIGIGQSQDDSIVGLRQTKHIPTALPVSGTLSSSNPDLLQSHHRILDFSATPDLPDQVLRVFKADQQSRYIMISKDTTAKEVVVQAIREFAVTATPDQYSLCEVSVTPEGVIKQRRLPDQLSKLADRIQLSGRYYLKNNMETETLCSDEDAQELLRESQISLLQLSTVEVATQLSMRNFELFRNIEPTEYIDDLFKLKSKTSCANLKTFEEVINQETFWVASEILRETNQLKRMKIIKHFIKIALHCRECKNFNSMFAIISGLNLAPVARLRTTWEKLPNKYEKLFQDLQDLFDPSRNMAKYRNVLNSQNLQPPIIPLFPVIKKDLTFLHEGNDSKVDGLVNFEKLRMIAKEIRHVGRMASVNMDPALMFRTRKKKWRSLGSLSQGSTNATVLDVAQTGGHKKRVRRSSFLNAKKLYEDAQMARKVKQYLSNLELEMDEESLQTLSLQCEPATNTLPKNPTDKKPVKSETSPVAPRAGLQPKAQPQPQPPQPPHKLNQGLQVPAVSLYPSRKKVPVKDLPPFGINSPQALKKILSLSEEGSLERHRRPAEDTISNTSSQLSSPPTSPQSSPRKGYTLAPSGTVDNFSDSGHSEISSRSSIVSNSSFDSLPVSLPDERRQRPSVSIVETSLASGRLERRPAVEPDQYSLGSCAPLSESRGLYAAATVISSPSTEELSQDQGDRASLDAADSGRGSWTSCSSGSHDNIQTIQHQRSWETLPFGHTHFDYPGDAAGLWASSSHMDQIMFPDHSAKYSRQSQSRESLDQAQSRASWASSTGYWGEDSEGDTGTIKRRGGKDVSLDADSSSMTAVTAEEAKPAAMAAHIAVTPSAAKGLIARKEGRYREPPPTPPGYVGIPITDFPEAHPHPARKPPDYTVALQRSRMLARPAEPPAPGSARPAPRPQWHRPGDGDPRAGPCAPPGLTAEEDEDEQVSAV</sequence>
<gene>
    <name type="primary">RAPGEF2</name>
    <name type="synonym">NRAPGEP</name>
    <name type="synonym">PDZGEF1</name>
</gene>